<reference key="1">
    <citation type="journal article" date="2006" name="Proc. Natl. Acad. Sci. U.S.A.">
        <title>Burkholderia xenovorans LB400 harbors a multi-replicon, 9.73-Mbp genome shaped for versatility.</title>
        <authorList>
            <person name="Chain P.S.G."/>
            <person name="Denef V.J."/>
            <person name="Konstantinidis K.T."/>
            <person name="Vergez L.M."/>
            <person name="Agullo L."/>
            <person name="Reyes V.L."/>
            <person name="Hauser L."/>
            <person name="Cordova M."/>
            <person name="Gomez L."/>
            <person name="Gonzalez M."/>
            <person name="Land M."/>
            <person name="Lao V."/>
            <person name="Larimer F."/>
            <person name="LiPuma J.J."/>
            <person name="Mahenthiralingam E."/>
            <person name="Malfatti S.A."/>
            <person name="Marx C.J."/>
            <person name="Parnell J.J."/>
            <person name="Ramette A."/>
            <person name="Richardson P."/>
            <person name="Seeger M."/>
            <person name="Smith D."/>
            <person name="Spilker T."/>
            <person name="Sul W.J."/>
            <person name="Tsoi T.V."/>
            <person name="Ulrich L.E."/>
            <person name="Zhulin I.B."/>
            <person name="Tiedje J.M."/>
        </authorList>
    </citation>
    <scope>NUCLEOTIDE SEQUENCE [LARGE SCALE GENOMIC DNA]</scope>
    <source>
        <strain>LB400</strain>
    </source>
</reference>
<accession>Q13Z72</accession>
<protein>
    <recommendedName>
        <fullName evidence="1">5'-nucleotidase SurE</fullName>
        <ecNumber evidence="1">3.1.3.5</ecNumber>
    </recommendedName>
    <alternativeName>
        <fullName evidence="1">Nucleoside 5'-monophosphate phosphohydrolase</fullName>
    </alternativeName>
</protein>
<keyword id="KW-0963">Cytoplasm</keyword>
<keyword id="KW-0378">Hydrolase</keyword>
<keyword id="KW-0479">Metal-binding</keyword>
<keyword id="KW-0547">Nucleotide-binding</keyword>
<keyword id="KW-1185">Reference proteome</keyword>
<evidence type="ECO:0000255" key="1">
    <source>
        <dbReference type="HAMAP-Rule" id="MF_00060"/>
    </source>
</evidence>
<organism>
    <name type="scientific">Paraburkholderia xenovorans (strain LB400)</name>
    <dbReference type="NCBI Taxonomy" id="266265"/>
    <lineage>
        <taxon>Bacteria</taxon>
        <taxon>Pseudomonadati</taxon>
        <taxon>Pseudomonadota</taxon>
        <taxon>Betaproteobacteria</taxon>
        <taxon>Burkholderiales</taxon>
        <taxon>Burkholderiaceae</taxon>
        <taxon>Paraburkholderia</taxon>
    </lineage>
</organism>
<feature type="chain" id="PRO_1000007712" description="5'-nucleotidase SurE">
    <location>
        <begin position="1"/>
        <end position="252"/>
    </location>
</feature>
<feature type="binding site" evidence="1">
    <location>
        <position position="8"/>
    </location>
    <ligand>
        <name>a divalent metal cation</name>
        <dbReference type="ChEBI" id="CHEBI:60240"/>
    </ligand>
</feature>
<feature type="binding site" evidence="1">
    <location>
        <position position="9"/>
    </location>
    <ligand>
        <name>a divalent metal cation</name>
        <dbReference type="ChEBI" id="CHEBI:60240"/>
    </ligand>
</feature>
<feature type="binding site" evidence="1">
    <location>
        <position position="39"/>
    </location>
    <ligand>
        <name>a divalent metal cation</name>
        <dbReference type="ChEBI" id="CHEBI:60240"/>
    </ligand>
</feature>
<feature type="binding site" evidence="1">
    <location>
        <position position="91"/>
    </location>
    <ligand>
        <name>a divalent metal cation</name>
        <dbReference type="ChEBI" id="CHEBI:60240"/>
    </ligand>
</feature>
<comment type="function">
    <text evidence="1">Nucleotidase that shows phosphatase activity on nucleoside 5'-monophosphates.</text>
</comment>
<comment type="catalytic activity">
    <reaction evidence="1">
        <text>a ribonucleoside 5'-phosphate + H2O = a ribonucleoside + phosphate</text>
        <dbReference type="Rhea" id="RHEA:12484"/>
        <dbReference type="ChEBI" id="CHEBI:15377"/>
        <dbReference type="ChEBI" id="CHEBI:18254"/>
        <dbReference type="ChEBI" id="CHEBI:43474"/>
        <dbReference type="ChEBI" id="CHEBI:58043"/>
        <dbReference type="EC" id="3.1.3.5"/>
    </reaction>
</comment>
<comment type="cofactor">
    <cofactor evidence="1">
        <name>a divalent metal cation</name>
        <dbReference type="ChEBI" id="CHEBI:60240"/>
    </cofactor>
    <text evidence="1">Binds 1 divalent metal cation per subunit.</text>
</comment>
<comment type="subcellular location">
    <subcellularLocation>
        <location evidence="1">Cytoplasm</location>
    </subcellularLocation>
</comment>
<comment type="similarity">
    <text evidence="1">Belongs to the SurE nucleotidase family.</text>
</comment>
<dbReference type="EC" id="3.1.3.5" evidence="1"/>
<dbReference type="EMBL" id="CP000270">
    <property type="protein sequence ID" value="ABE30617.1"/>
    <property type="molecule type" value="Genomic_DNA"/>
</dbReference>
<dbReference type="RefSeq" id="WP_011488250.1">
    <property type="nucleotide sequence ID" value="NC_007951.1"/>
</dbReference>
<dbReference type="SMR" id="Q13Z72"/>
<dbReference type="STRING" id="266265.Bxe_A2353"/>
<dbReference type="KEGG" id="bxb:DR64_57"/>
<dbReference type="KEGG" id="bxe:Bxe_A2353"/>
<dbReference type="PATRIC" id="fig|266265.5.peg.2175"/>
<dbReference type="eggNOG" id="COG0496">
    <property type="taxonomic scope" value="Bacteria"/>
</dbReference>
<dbReference type="OrthoDB" id="9780815at2"/>
<dbReference type="Proteomes" id="UP000001817">
    <property type="component" value="Chromosome 1"/>
</dbReference>
<dbReference type="GO" id="GO:0005737">
    <property type="term" value="C:cytoplasm"/>
    <property type="evidence" value="ECO:0007669"/>
    <property type="project" value="UniProtKB-SubCell"/>
</dbReference>
<dbReference type="GO" id="GO:0008254">
    <property type="term" value="F:3'-nucleotidase activity"/>
    <property type="evidence" value="ECO:0007669"/>
    <property type="project" value="TreeGrafter"/>
</dbReference>
<dbReference type="GO" id="GO:0008253">
    <property type="term" value="F:5'-nucleotidase activity"/>
    <property type="evidence" value="ECO:0007669"/>
    <property type="project" value="UniProtKB-UniRule"/>
</dbReference>
<dbReference type="GO" id="GO:0004309">
    <property type="term" value="F:exopolyphosphatase activity"/>
    <property type="evidence" value="ECO:0007669"/>
    <property type="project" value="TreeGrafter"/>
</dbReference>
<dbReference type="GO" id="GO:0046872">
    <property type="term" value="F:metal ion binding"/>
    <property type="evidence" value="ECO:0007669"/>
    <property type="project" value="UniProtKB-UniRule"/>
</dbReference>
<dbReference type="GO" id="GO:0000166">
    <property type="term" value="F:nucleotide binding"/>
    <property type="evidence" value="ECO:0007669"/>
    <property type="project" value="UniProtKB-KW"/>
</dbReference>
<dbReference type="FunFam" id="3.40.1210.10:FF:000001">
    <property type="entry name" value="5'/3'-nucleotidase SurE"/>
    <property type="match status" value="1"/>
</dbReference>
<dbReference type="Gene3D" id="3.40.1210.10">
    <property type="entry name" value="Survival protein SurE-like phosphatase/nucleotidase"/>
    <property type="match status" value="1"/>
</dbReference>
<dbReference type="HAMAP" id="MF_00060">
    <property type="entry name" value="SurE"/>
    <property type="match status" value="1"/>
</dbReference>
<dbReference type="InterPro" id="IPR030048">
    <property type="entry name" value="SurE"/>
</dbReference>
<dbReference type="InterPro" id="IPR002828">
    <property type="entry name" value="SurE-like_Pase/nucleotidase"/>
</dbReference>
<dbReference type="InterPro" id="IPR036523">
    <property type="entry name" value="SurE-like_sf"/>
</dbReference>
<dbReference type="NCBIfam" id="NF001489">
    <property type="entry name" value="PRK00346.1-3"/>
    <property type="match status" value="1"/>
</dbReference>
<dbReference type="NCBIfam" id="NF001490">
    <property type="entry name" value="PRK00346.1-4"/>
    <property type="match status" value="1"/>
</dbReference>
<dbReference type="NCBIfam" id="TIGR00087">
    <property type="entry name" value="surE"/>
    <property type="match status" value="1"/>
</dbReference>
<dbReference type="PANTHER" id="PTHR30457">
    <property type="entry name" value="5'-NUCLEOTIDASE SURE"/>
    <property type="match status" value="1"/>
</dbReference>
<dbReference type="PANTHER" id="PTHR30457:SF12">
    <property type="entry name" value="5'_3'-NUCLEOTIDASE SURE"/>
    <property type="match status" value="1"/>
</dbReference>
<dbReference type="Pfam" id="PF01975">
    <property type="entry name" value="SurE"/>
    <property type="match status" value="1"/>
</dbReference>
<dbReference type="SUPFAM" id="SSF64167">
    <property type="entry name" value="SurE-like"/>
    <property type="match status" value="1"/>
</dbReference>
<proteinExistence type="inferred from homology"/>
<name>SURE_PARXL</name>
<sequence length="252" mass="26993">MRILLSNDDGYLAPGLAALYEALKPIADVTVMAPEQNCSGASNSLTLSRPLSVLRSANGFYYVNGTPTDSVHIALTGMLDHRPDLVVSGINNGQNMGEDTLYSGTVAAATEGIMFGVPAIAFSLVDKDWVHLEDAVRVSAEIVAHYLEQPLPGHPLLNVNIPNLPYDQLGDWQITRLGKRHPSQPVIRQTNPRGEPIYWIGPAGSARDASEGTDFHAVANGHVSITPLQLDLTHTQMLPAARDWARAGSGAS</sequence>
<gene>
    <name evidence="1" type="primary">surE</name>
    <name type="ordered locus">Bxeno_A2079</name>
    <name type="ORF">Bxe_A2353</name>
</gene>